<feature type="chain" id="PRO_0000123209" description="Small ribosomal subunit protein uS11">
    <location>
        <begin position="1"/>
        <end position="127"/>
    </location>
</feature>
<reference key="1">
    <citation type="journal article" date="2001" name="Science">
        <title>Mechanisms of evolution in Rickettsia conorii and R. prowazekii.</title>
        <authorList>
            <person name="Ogata H."/>
            <person name="Audic S."/>
            <person name="Renesto-Audiffren P."/>
            <person name="Fournier P.-E."/>
            <person name="Barbe V."/>
            <person name="Samson D."/>
            <person name="Roux V."/>
            <person name="Cossart P."/>
            <person name="Weissenbach J."/>
            <person name="Claverie J.-M."/>
            <person name="Raoult D."/>
        </authorList>
    </citation>
    <scope>NUCLEOTIDE SEQUENCE [LARGE SCALE GENOMIC DNA]</scope>
    <source>
        <strain>ATCC VR-613 / Malish 7</strain>
    </source>
</reference>
<accession>Q92GY9</accession>
<organism>
    <name type="scientific">Rickettsia conorii (strain ATCC VR-613 / Malish 7)</name>
    <dbReference type="NCBI Taxonomy" id="272944"/>
    <lineage>
        <taxon>Bacteria</taxon>
        <taxon>Pseudomonadati</taxon>
        <taxon>Pseudomonadota</taxon>
        <taxon>Alphaproteobacteria</taxon>
        <taxon>Rickettsiales</taxon>
        <taxon>Rickettsiaceae</taxon>
        <taxon>Rickettsieae</taxon>
        <taxon>Rickettsia</taxon>
        <taxon>spotted fever group</taxon>
    </lineage>
</organism>
<keyword id="KW-0687">Ribonucleoprotein</keyword>
<keyword id="KW-0689">Ribosomal protein</keyword>
<keyword id="KW-0694">RNA-binding</keyword>
<keyword id="KW-0699">rRNA-binding</keyword>
<dbReference type="EMBL" id="AE006914">
    <property type="protein sequence ID" value="AAL03521.1"/>
    <property type="molecule type" value="Genomic_DNA"/>
</dbReference>
<dbReference type="PIR" id="G97822">
    <property type="entry name" value="G97822"/>
</dbReference>
<dbReference type="RefSeq" id="WP_004997839.1">
    <property type="nucleotide sequence ID" value="NC_003103.1"/>
</dbReference>
<dbReference type="SMR" id="Q92GY9"/>
<dbReference type="GeneID" id="95361463"/>
<dbReference type="KEGG" id="rco:RC0983"/>
<dbReference type="HOGENOM" id="CLU_072439_5_0_5"/>
<dbReference type="Proteomes" id="UP000000816">
    <property type="component" value="Chromosome"/>
</dbReference>
<dbReference type="GO" id="GO:1990904">
    <property type="term" value="C:ribonucleoprotein complex"/>
    <property type="evidence" value="ECO:0007669"/>
    <property type="project" value="UniProtKB-KW"/>
</dbReference>
<dbReference type="GO" id="GO:0005840">
    <property type="term" value="C:ribosome"/>
    <property type="evidence" value="ECO:0007669"/>
    <property type="project" value="UniProtKB-KW"/>
</dbReference>
<dbReference type="GO" id="GO:0019843">
    <property type="term" value="F:rRNA binding"/>
    <property type="evidence" value="ECO:0007669"/>
    <property type="project" value="UniProtKB-UniRule"/>
</dbReference>
<dbReference type="GO" id="GO:0003735">
    <property type="term" value="F:structural constituent of ribosome"/>
    <property type="evidence" value="ECO:0007669"/>
    <property type="project" value="InterPro"/>
</dbReference>
<dbReference type="GO" id="GO:0006412">
    <property type="term" value="P:translation"/>
    <property type="evidence" value="ECO:0007669"/>
    <property type="project" value="UniProtKB-UniRule"/>
</dbReference>
<dbReference type="Gene3D" id="3.30.420.80">
    <property type="entry name" value="Ribosomal protein S11"/>
    <property type="match status" value="1"/>
</dbReference>
<dbReference type="HAMAP" id="MF_01310">
    <property type="entry name" value="Ribosomal_uS11"/>
    <property type="match status" value="1"/>
</dbReference>
<dbReference type="InterPro" id="IPR001971">
    <property type="entry name" value="Ribosomal_uS11"/>
</dbReference>
<dbReference type="InterPro" id="IPR019981">
    <property type="entry name" value="Ribosomal_uS11_bac-type"/>
</dbReference>
<dbReference type="InterPro" id="IPR018102">
    <property type="entry name" value="Ribosomal_uS11_CS"/>
</dbReference>
<dbReference type="InterPro" id="IPR036967">
    <property type="entry name" value="Ribosomal_uS11_sf"/>
</dbReference>
<dbReference type="NCBIfam" id="NF003698">
    <property type="entry name" value="PRK05309.1"/>
    <property type="match status" value="1"/>
</dbReference>
<dbReference type="NCBIfam" id="TIGR03632">
    <property type="entry name" value="uS11_bact"/>
    <property type="match status" value="1"/>
</dbReference>
<dbReference type="PANTHER" id="PTHR11759">
    <property type="entry name" value="40S RIBOSOMAL PROTEIN S14/30S RIBOSOMAL PROTEIN S11"/>
    <property type="match status" value="1"/>
</dbReference>
<dbReference type="Pfam" id="PF00411">
    <property type="entry name" value="Ribosomal_S11"/>
    <property type="match status" value="1"/>
</dbReference>
<dbReference type="PIRSF" id="PIRSF002131">
    <property type="entry name" value="Ribosomal_S11"/>
    <property type="match status" value="1"/>
</dbReference>
<dbReference type="SUPFAM" id="SSF53137">
    <property type="entry name" value="Translational machinery components"/>
    <property type="match status" value="1"/>
</dbReference>
<dbReference type="PROSITE" id="PS00054">
    <property type="entry name" value="RIBOSOMAL_S11"/>
    <property type="match status" value="1"/>
</dbReference>
<name>RS11_RICCN</name>
<proteinExistence type="inferred from homology"/>
<gene>
    <name evidence="1" type="primary">rpsK</name>
    <name type="ordered locus">RC0983</name>
</gene>
<protein>
    <recommendedName>
        <fullName evidence="1">Small ribosomal subunit protein uS11</fullName>
    </recommendedName>
    <alternativeName>
        <fullName evidence="2">30S ribosomal protein S11</fullName>
    </alternativeName>
</protein>
<sequence length="127" mass="13641">MNQTVKVKKKKKTITLGVVHIRASFNNTIVTFTDIQGNTIASASAGGNGFKGARKATPYAAQVTIDRASEKAKEYGLKTISIRIGGPGAQRESAMRALFGQNFVVTSILDVSSIAHNGVRPPKRRRV</sequence>
<evidence type="ECO:0000255" key="1">
    <source>
        <dbReference type="HAMAP-Rule" id="MF_01310"/>
    </source>
</evidence>
<evidence type="ECO:0000305" key="2"/>
<comment type="function">
    <text evidence="1">Located on the platform of the 30S subunit, it bridges several disparate RNA helices of the 16S rRNA. Forms part of the Shine-Dalgarno cleft in the 70S ribosome.</text>
</comment>
<comment type="subunit">
    <text evidence="1">Part of the 30S ribosomal subunit. Interacts with proteins S7 and S18. Binds to IF-3.</text>
</comment>
<comment type="similarity">
    <text evidence="1">Belongs to the universal ribosomal protein uS11 family.</text>
</comment>